<dbReference type="EMBL" id="X54860">
    <property type="protein sequence ID" value="CAA38646.1"/>
    <property type="molecule type" value="Genomic_DNA"/>
</dbReference>
<dbReference type="EMBL" id="U03843">
    <property type="protein sequence ID" value="AAB93447.1"/>
    <property type="molecule type" value="Genomic_DNA"/>
</dbReference>
<dbReference type="PIR" id="S01651">
    <property type="entry name" value="S01651"/>
</dbReference>
<dbReference type="RefSeq" id="NP_042571.1">
    <property type="nucleotide sequence ID" value="NC_001638.1"/>
</dbReference>
<dbReference type="SMR" id="P11660"/>
<dbReference type="PaxDb" id="3055-AAB93447"/>
<dbReference type="GeneID" id="801489"/>
<dbReference type="KEGG" id="cre:ChrepMp08"/>
<dbReference type="HOGENOM" id="CLU_753080_0_0_1"/>
<dbReference type="GO" id="GO:0005739">
    <property type="term" value="C:mitochondrion"/>
    <property type="evidence" value="ECO:0007669"/>
    <property type="project" value="UniProtKB-SubCell"/>
</dbReference>
<dbReference type="InterPro" id="IPR043502">
    <property type="entry name" value="DNA/RNA_pol_sf"/>
</dbReference>
<dbReference type="InterPro" id="IPR000477">
    <property type="entry name" value="RT_dom"/>
</dbReference>
<dbReference type="Pfam" id="PF00078">
    <property type="entry name" value="RVT_1"/>
    <property type="match status" value="1"/>
</dbReference>
<dbReference type="SUPFAM" id="SSF56672">
    <property type="entry name" value="DNA/RNA polymerases"/>
    <property type="match status" value="1"/>
</dbReference>
<dbReference type="PROSITE" id="PS50878">
    <property type="entry name" value="RT_POL"/>
    <property type="match status" value="1"/>
</dbReference>
<evidence type="ECO:0000255" key="1">
    <source>
        <dbReference type="PROSITE-ProRule" id="PRU00405"/>
    </source>
</evidence>
<protein>
    <recommendedName>
        <fullName>Reverse transcriptase-like protein</fullName>
    </recommendedName>
</protein>
<gene>
    <name type="primary">RTL</name>
</gene>
<accession>P11660</accession>
<sequence length="368" mass="42536">MFTVNYILDLFHTINATEVQHTLMHKRPASLHEVLRLAGLLQGYKDFLSLTKQAEAFFQAGDYRSAFNTISKMWVHPQIVPALLLMECFETRELTVPYWYKSIKLRRQYIQKKNGGVRPIIVAHKGLRICMAVINRLLQSCCVSWSNQTFGFRPGFGTHHAVLHLAQKAQQMLNKQQQAVLVTFDLQAAYNSVDIKHLMQTLQLQYLPNDMKKLIWMWQHLPLAQLNAGINGLAQGYAYSPTLFAWYVDQLVGQHMDFTIYADNFAGVFLTQQDAQFAVKEAQTLLQKSGLLIAPSSIKMHLLDKNQHSELNWLGHKVLFPSCTVKLQHHQLLVNQHSPQVWTIQKWDKMLRTLGWVQLALNADWRRF</sequence>
<reference key="1">
    <citation type="journal article" date="1988" name="EMBO J.">
        <title>Genes encoding a subunit of respiratory NADH dehydrogenase (ND1) and a reverse transcriptase-like protein (RTL) are linked to ribosomal RNA gene pieces in Chlamydomonas reinhardtii mitochondrial DNA.</title>
        <authorList>
            <person name="Boer P.H."/>
            <person name="Gray M.W."/>
        </authorList>
    </citation>
    <scope>NUCLEOTIDE SEQUENCE [GENOMIC DNA]</scope>
    <source>
        <strain>cw15</strain>
    </source>
</reference>
<reference key="2">
    <citation type="submission" date="1995-01" db="EMBL/GenBank/DDBJ databases">
        <authorList>
            <person name="Gray M.W."/>
        </authorList>
    </citation>
    <scope>NUCLEOTIDE SEQUENCE [GENOMIC DNA]</scope>
    <source>
        <strain>cw15</strain>
    </source>
</reference>
<name>RTL_CHLRE</name>
<keyword id="KW-0496">Mitochondrion</keyword>
<organism>
    <name type="scientific">Chlamydomonas reinhardtii</name>
    <name type="common">Chlamydomonas smithii</name>
    <dbReference type="NCBI Taxonomy" id="3055"/>
    <lineage>
        <taxon>Eukaryota</taxon>
        <taxon>Viridiplantae</taxon>
        <taxon>Chlorophyta</taxon>
        <taxon>core chlorophytes</taxon>
        <taxon>Chlorophyceae</taxon>
        <taxon>CS clade</taxon>
        <taxon>Chlamydomonadales</taxon>
        <taxon>Chlamydomonadaceae</taxon>
        <taxon>Chlamydomonas</taxon>
    </lineage>
</organism>
<proteinExistence type="predicted"/>
<feature type="chain" id="PRO_0000097515" description="Reverse transcriptase-like protein">
    <location>
        <begin position="1"/>
        <end position="368"/>
    </location>
</feature>
<feature type="domain" description="Reverse transcriptase" evidence="1">
    <location>
        <begin position="91"/>
        <end position="318"/>
    </location>
</feature>
<geneLocation type="mitochondrion"/>
<comment type="subcellular location">
    <subcellularLocation>
        <location>Mitochondrion</location>
    </subcellularLocation>
</comment>